<accession>B1HX32</accession>
<comment type="function">
    <text evidence="1">Catalyzes the phosphorylation of the hydroxyl group of 4-methyl-5-beta-hydroxyethylthiazole (THZ).</text>
</comment>
<comment type="catalytic activity">
    <reaction evidence="1">
        <text>5-(2-hydroxyethyl)-4-methylthiazole + ATP = 4-methyl-5-(2-phosphooxyethyl)-thiazole + ADP + H(+)</text>
        <dbReference type="Rhea" id="RHEA:24212"/>
        <dbReference type="ChEBI" id="CHEBI:15378"/>
        <dbReference type="ChEBI" id="CHEBI:17957"/>
        <dbReference type="ChEBI" id="CHEBI:30616"/>
        <dbReference type="ChEBI" id="CHEBI:58296"/>
        <dbReference type="ChEBI" id="CHEBI:456216"/>
        <dbReference type="EC" id="2.7.1.50"/>
    </reaction>
</comment>
<comment type="cofactor">
    <cofactor evidence="1">
        <name>Mg(2+)</name>
        <dbReference type="ChEBI" id="CHEBI:18420"/>
    </cofactor>
</comment>
<comment type="pathway">
    <text evidence="1">Cofactor biosynthesis; thiamine diphosphate biosynthesis; 4-methyl-5-(2-phosphoethyl)-thiazole from 5-(2-hydroxyethyl)-4-methylthiazole: step 1/1.</text>
</comment>
<comment type="similarity">
    <text evidence="1">Belongs to the Thz kinase family.</text>
</comment>
<sequence length="255" mass="27436">MIFQTIRQQQPLIHCITNYVVANFQANGLLALGASPVMADDSHEVEEMVAIAEALLINIGTLNDRTKEAMLLAGKKANTLGIPVILDPVGAGATVYRKETVHLLLTDIQFAVIRCNKGELAALVNVEWQQKGVDSGDGFIDIETEATLLAQRYNCIVIVTGEHDFMTDGVQSQWITGGNSQMTEVTGTGCLLSAICGAAYSSGEDPYSQLVETLTYYKKAAELASAFTEDIGDIQIALLNALHRLSKEGEASCIL</sequence>
<protein>
    <recommendedName>
        <fullName evidence="1">Hydroxyethylthiazole kinase</fullName>
        <ecNumber evidence="1">2.7.1.50</ecNumber>
    </recommendedName>
    <alternativeName>
        <fullName evidence="1">4-methyl-5-beta-hydroxyethylthiazole kinase</fullName>
        <shortName evidence="1">TH kinase</shortName>
        <shortName evidence="1">Thz kinase</shortName>
    </alternativeName>
</protein>
<organism>
    <name type="scientific">Lysinibacillus sphaericus (strain C3-41)</name>
    <dbReference type="NCBI Taxonomy" id="444177"/>
    <lineage>
        <taxon>Bacteria</taxon>
        <taxon>Bacillati</taxon>
        <taxon>Bacillota</taxon>
        <taxon>Bacilli</taxon>
        <taxon>Bacillales</taxon>
        <taxon>Bacillaceae</taxon>
        <taxon>Lysinibacillus</taxon>
    </lineage>
</organism>
<name>THIM_LYSSC</name>
<feature type="chain" id="PRO_0000383884" description="Hydroxyethylthiazole kinase">
    <location>
        <begin position="1"/>
        <end position="255"/>
    </location>
</feature>
<feature type="binding site" evidence="1">
    <location>
        <position position="38"/>
    </location>
    <ligand>
        <name>substrate</name>
    </ligand>
</feature>
<feature type="binding site" evidence="1">
    <location>
        <position position="114"/>
    </location>
    <ligand>
        <name>ATP</name>
        <dbReference type="ChEBI" id="CHEBI:30616"/>
    </ligand>
</feature>
<feature type="binding site" evidence="1">
    <location>
        <position position="160"/>
    </location>
    <ligand>
        <name>ATP</name>
        <dbReference type="ChEBI" id="CHEBI:30616"/>
    </ligand>
</feature>
<feature type="binding site" evidence="1">
    <location>
        <position position="187"/>
    </location>
    <ligand>
        <name>substrate</name>
    </ligand>
</feature>
<keyword id="KW-0067">ATP-binding</keyword>
<keyword id="KW-0418">Kinase</keyword>
<keyword id="KW-0460">Magnesium</keyword>
<keyword id="KW-0479">Metal-binding</keyword>
<keyword id="KW-0547">Nucleotide-binding</keyword>
<keyword id="KW-0784">Thiamine biosynthesis</keyword>
<keyword id="KW-0808">Transferase</keyword>
<evidence type="ECO:0000255" key="1">
    <source>
        <dbReference type="HAMAP-Rule" id="MF_00228"/>
    </source>
</evidence>
<gene>
    <name evidence="1" type="primary">thiM</name>
    <name type="ordered locus">Bsph_4147</name>
</gene>
<dbReference type="EC" id="2.7.1.50" evidence="1"/>
<dbReference type="EMBL" id="CP000817">
    <property type="protein sequence ID" value="ACA41608.1"/>
    <property type="molecule type" value="Genomic_DNA"/>
</dbReference>
<dbReference type="RefSeq" id="WP_012295639.1">
    <property type="nucleotide sequence ID" value="NC_010382.1"/>
</dbReference>
<dbReference type="SMR" id="B1HX32"/>
<dbReference type="EnsemblBacteria" id="ACA41608">
    <property type="protein sequence ID" value="ACA41608"/>
    <property type="gene ID" value="Bsph_4147"/>
</dbReference>
<dbReference type="KEGG" id="lsp:Bsph_4147"/>
<dbReference type="HOGENOM" id="CLU_019943_0_0_9"/>
<dbReference type="UniPathway" id="UPA00060">
    <property type="reaction ID" value="UER00139"/>
</dbReference>
<dbReference type="Proteomes" id="UP000002164">
    <property type="component" value="Chromosome"/>
</dbReference>
<dbReference type="GO" id="GO:0005524">
    <property type="term" value="F:ATP binding"/>
    <property type="evidence" value="ECO:0007669"/>
    <property type="project" value="UniProtKB-UniRule"/>
</dbReference>
<dbReference type="GO" id="GO:0004417">
    <property type="term" value="F:hydroxyethylthiazole kinase activity"/>
    <property type="evidence" value="ECO:0007669"/>
    <property type="project" value="UniProtKB-UniRule"/>
</dbReference>
<dbReference type="GO" id="GO:0000287">
    <property type="term" value="F:magnesium ion binding"/>
    <property type="evidence" value="ECO:0007669"/>
    <property type="project" value="UniProtKB-UniRule"/>
</dbReference>
<dbReference type="GO" id="GO:0009228">
    <property type="term" value="P:thiamine biosynthetic process"/>
    <property type="evidence" value="ECO:0007669"/>
    <property type="project" value="UniProtKB-KW"/>
</dbReference>
<dbReference type="GO" id="GO:0009229">
    <property type="term" value="P:thiamine diphosphate biosynthetic process"/>
    <property type="evidence" value="ECO:0007669"/>
    <property type="project" value="UniProtKB-UniRule"/>
</dbReference>
<dbReference type="CDD" id="cd01170">
    <property type="entry name" value="THZ_kinase"/>
    <property type="match status" value="1"/>
</dbReference>
<dbReference type="Gene3D" id="3.40.1190.20">
    <property type="match status" value="1"/>
</dbReference>
<dbReference type="HAMAP" id="MF_00228">
    <property type="entry name" value="Thz_kinase"/>
    <property type="match status" value="1"/>
</dbReference>
<dbReference type="InterPro" id="IPR000417">
    <property type="entry name" value="Hyethyz_kinase"/>
</dbReference>
<dbReference type="InterPro" id="IPR029056">
    <property type="entry name" value="Ribokinase-like"/>
</dbReference>
<dbReference type="NCBIfam" id="NF006830">
    <property type="entry name" value="PRK09355.1"/>
    <property type="match status" value="1"/>
</dbReference>
<dbReference type="NCBIfam" id="TIGR00694">
    <property type="entry name" value="thiM"/>
    <property type="match status" value="1"/>
</dbReference>
<dbReference type="Pfam" id="PF02110">
    <property type="entry name" value="HK"/>
    <property type="match status" value="1"/>
</dbReference>
<dbReference type="PIRSF" id="PIRSF000513">
    <property type="entry name" value="Thz_kinase"/>
    <property type="match status" value="1"/>
</dbReference>
<dbReference type="PRINTS" id="PR01099">
    <property type="entry name" value="HYETHTZKNASE"/>
</dbReference>
<dbReference type="SUPFAM" id="SSF53613">
    <property type="entry name" value="Ribokinase-like"/>
    <property type="match status" value="1"/>
</dbReference>
<proteinExistence type="inferred from homology"/>
<reference key="1">
    <citation type="journal article" date="2008" name="J. Bacteriol.">
        <title>Complete genome sequence of the mosquitocidal bacterium Bacillus sphaericus C3-41 and comparison with those of closely related Bacillus species.</title>
        <authorList>
            <person name="Hu X."/>
            <person name="Fan W."/>
            <person name="Han B."/>
            <person name="Liu H."/>
            <person name="Zheng D."/>
            <person name="Li Q."/>
            <person name="Dong W."/>
            <person name="Yan J."/>
            <person name="Gao M."/>
            <person name="Berry C."/>
            <person name="Yuan Z."/>
        </authorList>
    </citation>
    <scope>NUCLEOTIDE SEQUENCE [LARGE SCALE GENOMIC DNA]</scope>
    <source>
        <strain>C3-41</strain>
    </source>
</reference>